<reference key="1">
    <citation type="submission" date="2000-10" db="EMBL/GenBank/DDBJ databases">
        <title>Characterization of a chromosomal locus that affects pathogenicity in Rhodococcus fascians.</title>
        <authorList>
            <person name="Vereecke D.M."/>
            <person name="Cornelis K."/>
            <person name="Van Montagu M."/>
            <person name="El Jaziri M."/>
            <person name="Holsters M."/>
            <person name="Goethals K."/>
        </authorList>
    </citation>
    <scope>NUCLEOTIDE SEQUENCE [GENOMIC DNA]</scope>
    <source>
        <strain>D188</strain>
    </source>
</reference>
<dbReference type="EC" id="2.3.3.9" evidence="1"/>
<dbReference type="EMBL" id="AJ301559">
    <property type="protein sequence ID" value="CAC35701.1"/>
    <property type="molecule type" value="Genomic_DNA"/>
</dbReference>
<dbReference type="SMR" id="Q9AE55"/>
<dbReference type="STRING" id="1443905.GCA_000761075_02922"/>
<dbReference type="UniPathway" id="UPA00703">
    <property type="reaction ID" value="UER00720"/>
</dbReference>
<dbReference type="GO" id="GO:0005829">
    <property type="term" value="C:cytosol"/>
    <property type="evidence" value="ECO:0007669"/>
    <property type="project" value="TreeGrafter"/>
</dbReference>
<dbReference type="GO" id="GO:0000287">
    <property type="term" value="F:magnesium ion binding"/>
    <property type="evidence" value="ECO:0007669"/>
    <property type="project" value="TreeGrafter"/>
</dbReference>
<dbReference type="GO" id="GO:0004474">
    <property type="term" value="F:malate synthase activity"/>
    <property type="evidence" value="ECO:0007669"/>
    <property type="project" value="UniProtKB-UniRule"/>
</dbReference>
<dbReference type="GO" id="GO:0009436">
    <property type="term" value="P:glyoxylate catabolic process"/>
    <property type="evidence" value="ECO:0007669"/>
    <property type="project" value="TreeGrafter"/>
</dbReference>
<dbReference type="GO" id="GO:0006097">
    <property type="term" value="P:glyoxylate cycle"/>
    <property type="evidence" value="ECO:0007669"/>
    <property type="project" value="UniProtKB-UniRule"/>
</dbReference>
<dbReference type="GO" id="GO:0006099">
    <property type="term" value="P:tricarboxylic acid cycle"/>
    <property type="evidence" value="ECO:0007669"/>
    <property type="project" value="UniProtKB-KW"/>
</dbReference>
<dbReference type="CDD" id="cd00728">
    <property type="entry name" value="malate_synt_G"/>
    <property type="match status" value="1"/>
</dbReference>
<dbReference type="FunFam" id="3.20.20.360:FF:000002">
    <property type="entry name" value="Malate synthase G"/>
    <property type="match status" value="1"/>
</dbReference>
<dbReference type="Gene3D" id="3.20.20.360">
    <property type="entry name" value="Malate synthase, domain 3"/>
    <property type="match status" value="2"/>
</dbReference>
<dbReference type="Gene3D" id="1.20.1220.12">
    <property type="entry name" value="Malate synthase, domain III"/>
    <property type="match status" value="1"/>
</dbReference>
<dbReference type="HAMAP" id="MF_00641">
    <property type="entry name" value="Malate_synth_G"/>
    <property type="match status" value="1"/>
</dbReference>
<dbReference type="InterPro" id="IPR044856">
    <property type="entry name" value="Malate_synth_C_sf"/>
</dbReference>
<dbReference type="InterPro" id="IPR011076">
    <property type="entry name" value="Malate_synth_sf"/>
</dbReference>
<dbReference type="InterPro" id="IPR001465">
    <property type="entry name" value="Malate_synthase_TIM"/>
</dbReference>
<dbReference type="InterPro" id="IPR006253">
    <property type="entry name" value="Malate_synthG"/>
</dbReference>
<dbReference type="InterPro" id="IPR048355">
    <property type="entry name" value="MS_C"/>
</dbReference>
<dbReference type="InterPro" id="IPR048356">
    <property type="entry name" value="MS_N"/>
</dbReference>
<dbReference type="InterPro" id="IPR046363">
    <property type="entry name" value="MS_N_TIM-barrel_dom"/>
</dbReference>
<dbReference type="InterPro" id="IPR048357">
    <property type="entry name" value="MSG_insertion"/>
</dbReference>
<dbReference type="NCBIfam" id="TIGR01345">
    <property type="entry name" value="malate_syn_G"/>
    <property type="match status" value="1"/>
</dbReference>
<dbReference type="NCBIfam" id="NF002825">
    <property type="entry name" value="PRK02999.1"/>
    <property type="match status" value="1"/>
</dbReference>
<dbReference type="PANTHER" id="PTHR42739">
    <property type="entry name" value="MALATE SYNTHASE G"/>
    <property type="match status" value="1"/>
</dbReference>
<dbReference type="PANTHER" id="PTHR42739:SF1">
    <property type="entry name" value="MALATE SYNTHASE G"/>
    <property type="match status" value="1"/>
</dbReference>
<dbReference type="Pfam" id="PF20659">
    <property type="entry name" value="MS_C"/>
    <property type="match status" value="1"/>
</dbReference>
<dbReference type="Pfam" id="PF20656">
    <property type="entry name" value="MS_N"/>
    <property type="match status" value="1"/>
</dbReference>
<dbReference type="Pfam" id="PF01274">
    <property type="entry name" value="MS_TIM-barrel"/>
    <property type="match status" value="1"/>
</dbReference>
<dbReference type="Pfam" id="PF20658">
    <property type="entry name" value="MSG_insertion"/>
    <property type="match status" value="1"/>
</dbReference>
<dbReference type="SUPFAM" id="SSF51645">
    <property type="entry name" value="Malate synthase G"/>
    <property type="match status" value="1"/>
</dbReference>
<sequence length="724" mass="78610">MTDRVQAGGLQVAKVLFDFVEKEALPGTDLDSEAFWAGAASVIADLAPKNKALLAVRDEIQGKVDAWHGEHAGAEYDRAAYKAFLKEIGYLLDEPADFQIHTSGVDTEITTTAGPQLVVPVLNARFAINASNARWGSLYDALYGTDAIPETDGAEKGTSYNKVRGDKVIAFARDFLDEALPLSSGSHVGTTGYVVDAASLTVTLADGSTVGLKDPSQLLGYQGTPDAPTAILFVHNGLHFEIQIDPESPIGKTDGAGVKDVLLESAVTTIMDFEDSVAAVDADDKVLGYRNWLGLMKGDLTEEVSKGGKTFTRAMNKDRTYTSVDGSELTLHGRSLLFVRNVGHLMTSDAILDADGNEVPEGILDALFTSLAGLHSLTPDNVLSNSRTGSLYIVKPKMHGPDEVAFTAELFGRVEQVLGLPTNTLKVGIMDEERRTTVNLKACIQAASERVVFINTGFLDRTGDEIHTSMEAGPVVRKGAMKGEKWIAAYEDFNVDTGLAAGLQGKAQIGKGMWAMPDLMHDMLEQKIGHPKAGANTAWVPSPTAATLHALHYHKVDVFARQHEIAKAKRATVDEILEIPLAPSTDWTDEEKQNELDNNSQSILGYVVRWIDHGVGCSKVPDINDIALMEDRATLRISSQFIANWLRHGIVTEEQVRESLKRMAPVVDRQNASDPTYKPLAPDFDTNIAFQAASDLIFQGTSQPNGYTEPILHRRRREYKAVNA</sequence>
<feature type="chain" id="PRO_0000166899" description="Malate synthase G">
    <location>
        <begin position="1"/>
        <end position="724"/>
    </location>
</feature>
<feature type="active site" description="Proton acceptor" evidence="1">
    <location>
        <position position="340"/>
    </location>
</feature>
<feature type="active site" description="Proton donor" evidence="1">
    <location>
        <position position="631"/>
    </location>
</feature>
<feature type="binding site" evidence="1">
    <location>
        <position position="118"/>
    </location>
    <ligand>
        <name>acetyl-CoA</name>
        <dbReference type="ChEBI" id="CHEBI:57288"/>
    </ligand>
</feature>
<feature type="binding site" evidence="1">
    <location>
        <begin position="125"/>
        <end position="126"/>
    </location>
    <ligand>
        <name>acetyl-CoA</name>
        <dbReference type="ChEBI" id="CHEBI:57288"/>
    </ligand>
</feature>
<feature type="binding site" evidence="1">
    <location>
        <position position="276"/>
    </location>
    <ligand>
        <name>acetyl-CoA</name>
        <dbReference type="ChEBI" id="CHEBI:57288"/>
    </ligand>
</feature>
<feature type="binding site" evidence="1">
    <location>
        <position position="313"/>
    </location>
    <ligand>
        <name>acetyl-CoA</name>
        <dbReference type="ChEBI" id="CHEBI:57288"/>
    </ligand>
</feature>
<feature type="binding site" evidence="1">
    <location>
        <position position="340"/>
    </location>
    <ligand>
        <name>glyoxylate</name>
        <dbReference type="ChEBI" id="CHEBI:36655"/>
    </ligand>
</feature>
<feature type="binding site" evidence="1">
    <location>
        <position position="432"/>
    </location>
    <ligand>
        <name>glyoxylate</name>
        <dbReference type="ChEBI" id="CHEBI:36655"/>
    </ligand>
</feature>
<feature type="binding site" evidence="1">
    <location>
        <position position="432"/>
    </location>
    <ligand>
        <name>Mg(2+)</name>
        <dbReference type="ChEBI" id="CHEBI:18420"/>
    </ligand>
</feature>
<feature type="binding site" evidence="1">
    <location>
        <begin position="457"/>
        <end position="460"/>
    </location>
    <ligand>
        <name>glyoxylate</name>
        <dbReference type="ChEBI" id="CHEBI:36655"/>
    </ligand>
</feature>
<feature type="binding site" evidence="1">
    <location>
        <position position="460"/>
    </location>
    <ligand>
        <name>Mg(2+)</name>
        <dbReference type="ChEBI" id="CHEBI:18420"/>
    </ligand>
</feature>
<feature type="binding site" evidence="1">
    <location>
        <position position="541"/>
    </location>
    <ligand>
        <name>acetyl-CoA</name>
        <dbReference type="ChEBI" id="CHEBI:57288"/>
    </ligand>
</feature>
<feature type="modified residue" description="Cysteine sulfenic acid (-SOH)" evidence="1">
    <location>
        <position position="617"/>
    </location>
</feature>
<gene>
    <name evidence="1" type="primary">glcB</name>
    <name type="synonym">vicA</name>
</gene>
<protein>
    <recommendedName>
        <fullName evidence="1">Malate synthase G</fullName>
        <ecNumber evidence="1">2.3.3.9</ecNumber>
    </recommendedName>
</protein>
<evidence type="ECO:0000255" key="1">
    <source>
        <dbReference type="HAMAP-Rule" id="MF_00641"/>
    </source>
</evidence>
<organism>
    <name type="scientific">Rhodococcoides fascians</name>
    <name type="common">Rhodococcus fascians</name>
    <dbReference type="NCBI Taxonomy" id="1828"/>
    <lineage>
        <taxon>Bacteria</taxon>
        <taxon>Bacillati</taxon>
        <taxon>Actinomycetota</taxon>
        <taxon>Actinomycetes</taxon>
        <taxon>Mycobacteriales</taxon>
        <taxon>Nocardiaceae</taxon>
        <taxon>Rhodococcoides</taxon>
    </lineage>
</organism>
<proteinExistence type="inferred from homology"/>
<name>MASZ_RHOFA</name>
<comment type="function">
    <text evidence="1">Involved in the glycolate utilization. Catalyzes the condensation and subsequent hydrolysis of acetyl-coenzyme A (acetyl-CoA) and glyoxylate to form malate and CoA.</text>
</comment>
<comment type="catalytic activity">
    <reaction evidence="1">
        <text>glyoxylate + acetyl-CoA + H2O = (S)-malate + CoA + H(+)</text>
        <dbReference type="Rhea" id="RHEA:18181"/>
        <dbReference type="ChEBI" id="CHEBI:15377"/>
        <dbReference type="ChEBI" id="CHEBI:15378"/>
        <dbReference type="ChEBI" id="CHEBI:15589"/>
        <dbReference type="ChEBI" id="CHEBI:36655"/>
        <dbReference type="ChEBI" id="CHEBI:57287"/>
        <dbReference type="ChEBI" id="CHEBI:57288"/>
        <dbReference type="EC" id="2.3.3.9"/>
    </reaction>
</comment>
<comment type="cofactor">
    <cofactor evidence="1">
        <name>Mg(2+)</name>
        <dbReference type="ChEBI" id="CHEBI:18420"/>
    </cofactor>
</comment>
<comment type="pathway">
    <text evidence="1">Carbohydrate metabolism; glyoxylate cycle; (S)-malate from isocitrate: step 2/2.</text>
</comment>
<comment type="subunit">
    <text evidence="1">Monomer.</text>
</comment>
<comment type="subcellular location">
    <subcellularLocation>
        <location evidence="1">Cytoplasm</location>
    </subcellularLocation>
</comment>
<comment type="similarity">
    <text evidence="1">Belongs to the malate synthase family. GlcB subfamily.</text>
</comment>
<keyword id="KW-0963">Cytoplasm</keyword>
<keyword id="KW-0329">Glyoxylate bypass</keyword>
<keyword id="KW-0460">Magnesium</keyword>
<keyword id="KW-0479">Metal-binding</keyword>
<keyword id="KW-0558">Oxidation</keyword>
<keyword id="KW-0808">Transferase</keyword>
<keyword id="KW-0816">Tricarboxylic acid cycle</keyword>
<accession>Q9AE55</accession>